<proteinExistence type="inferred from homology"/>
<accession>Q82XA0</accession>
<protein>
    <recommendedName>
        <fullName evidence="1">Putative membrane protein insertion efficiency factor</fullName>
    </recommendedName>
</protein>
<name>YIDD_NITEU</name>
<comment type="function">
    <text evidence="1">Could be involved in insertion of integral membrane proteins into the membrane.</text>
</comment>
<comment type="subcellular location">
    <subcellularLocation>
        <location evidence="1">Cell inner membrane</location>
        <topology evidence="1">Peripheral membrane protein</topology>
        <orientation evidence="1">Cytoplasmic side</orientation>
    </subcellularLocation>
</comment>
<comment type="similarity">
    <text evidence="1">Belongs to the UPF0161 family.</text>
</comment>
<keyword id="KW-0997">Cell inner membrane</keyword>
<keyword id="KW-1003">Cell membrane</keyword>
<keyword id="KW-0472">Membrane</keyword>
<keyword id="KW-1185">Reference proteome</keyword>
<reference key="1">
    <citation type="journal article" date="2003" name="J. Bacteriol.">
        <title>Complete genome sequence of the ammonia-oxidizing bacterium and obligate chemolithoautotroph Nitrosomonas europaea.</title>
        <authorList>
            <person name="Chain P."/>
            <person name="Lamerdin J.E."/>
            <person name="Larimer F.W."/>
            <person name="Regala W."/>
            <person name="Lao V."/>
            <person name="Land M.L."/>
            <person name="Hauser L."/>
            <person name="Hooper A.B."/>
            <person name="Klotz M.G."/>
            <person name="Norton J."/>
            <person name="Sayavedra-Soto L.A."/>
            <person name="Arciero D.M."/>
            <person name="Hommes N.G."/>
            <person name="Whittaker M.M."/>
            <person name="Arp D.J."/>
        </authorList>
    </citation>
    <scope>NUCLEOTIDE SEQUENCE [LARGE SCALE GENOMIC DNA]</scope>
    <source>
        <strain>ATCC 19718 / CIP 103999 / KCTC 2705 / NBRC 14298</strain>
    </source>
</reference>
<feature type="chain" id="PRO_0000171845" description="Putative membrane protein insertion efficiency factor">
    <location>
        <begin position="1"/>
        <end position="69"/>
    </location>
</feature>
<gene>
    <name type="ordered locus">NE0388</name>
</gene>
<sequence>MKQLIIDLIKLYRYSIGLLIPPSCRFYPTCSNYMHEALVKHGLIKGLWLGMKRILRCHPWNQGGYDPVP</sequence>
<dbReference type="EMBL" id="AL954747">
    <property type="protein sequence ID" value="CAD84299.1"/>
    <property type="molecule type" value="Genomic_DNA"/>
</dbReference>
<dbReference type="STRING" id="228410.NE0388"/>
<dbReference type="GeneID" id="87103596"/>
<dbReference type="KEGG" id="neu:NE0388"/>
<dbReference type="eggNOG" id="COG0759">
    <property type="taxonomic scope" value="Bacteria"/>
</dbReference>
<dbReference type="HOGENOM" id="CLU_144811_6_0_4"/>
<dbReference type="OrthoDB" id="9801753at2"/>
<dbReference type="PhylomeDB" id="Q82XA0"/>
<dbReference type="Proteomes" id="UP000001416">
    <property type="component" value="Chromosome"/>
</dbReference>
<dbReference type="GO" id="GO:0005886">
    <property type="term" value="C:plasma membrane"/>
    <property type="evidence" value="ECO:0007669"/>
    <property type="project" value="UniProtKB-SubCell"/>
</dbReference>
<dbReference type="HAMAP" id="MF_00386">
    <property type="entry name" value="UPF0161_YidD"/>
    <property type="match status" value="1"/>
</dbReference>
<dbReference type="InterPro" id="IPR002696">
    <property type="entry name" value="Membr_insert_effic_factor_YidD"/>
</dbReference>
<dbReference type="NCBIfam" id="TIGR00278">
    <property type="entry name" value="membrane protein insertion efficiency factor YidD"/>
    <property type="match status" value="1"/>
</dbReference>
<dbReference type="PANTHER" id="PTHR33383">
    <property type="entry name" value="MEMBRANE PROTEIN INSERTION EFFICIENCY FACTOR-RELATED"/>
    <property type="match status" value="1"/>
</dbReference>
<dbReference type="PANTHER" id="PTHR33383:SF1">
    <property type="entry name" value="MEMBRANE PROTEIN INSERTION EFFICIENCY FACTOR-RELATED"/>
    <property type="match status" value="1"/>
</dbReference>
<dbReference type="Pfam" id="PF01809">
    <property type="entry name" value="YidD"/>
    <property type="match status" value="1"/>
</dbReference>
<dbReference type="SMART" id="SM01234">
    <property type="entry name" value="Haemolytic"/>
    <property type="match status" value="1"/>
</dbReference>
<organism>
    <name type="scientific">Nitrosomonas europaea (strain ATCC 19718 / CIP 103999 / KCTC 2705 / NBRC 14298)</name>
    <dbReference type="NCBI Taxonomy" id="228410"/>
    <lineage>
        <taxon>Bacteria</taxon>
        <taxon>Pseudomonadati</taxon>
        <taxon>Pseudomonadota</taxon>
        <taxon>Betaproteobacteria</taxon>
        <taxon>Nitrosomonadales</taxon>
        <taxon>Nitrosomonadaceae</taxon>
        <taxon>Nitrosomonas</taxon>
    </lineage>
</organism>
<evidence type="ECO:0000255" key="1">
    <source>
        <dbReference type="HAMAP-Rule" id="MF_00386"/>
    </source>
</evidence>